<organism>
    <name type="scientific">Methanocaldococcus jannaschii (strain ATCC 43067 / DSM 2661 / JAL-1 / JCM 10045 / NBRC 100440)</name>
    <name type="common">Methanococcus jannaschii</name>
    <dbReference type="NCBI Taxonomy" id="243232"/>
    <lineage>
        <taxon>Archaea</taxon>
        <taxon>Methanobacteriati</taxon>
        <taxon>Methanobacteriota</taxon>
        <taxon>Methanomada group</taxon>
        <taxon>Methanococci</taxon>
        <taxon>Methanococcales</taxon>
        <taxon>Methanocaldococcaceae</taxon>
        <taxon>Methanocaldococcus</taxon>
    </lineage>
</organism>
<sequence>MDYKQWVREFKKELAHEIEKELVAEVDDNIQRGFQKKELKWKPLSKDYQKRKEKEGRNTKGLIYHGALLKATDSKVKITSKGLQVKVFNNMVYAGVHEFGSKKKNIPARPFIQPALKKVQKDLPKIVEKVIKRMR</sequence>
<proteinExistence type="predicted"/>
<reference key="1">
    <citation type="journal article" date="1996" name="Science">
        <title>Complete genome sequence of the methanogenic archaeon, Methanococcus jannaschii.</title>
        <authorList>
            <person name="Bult C.J."/>
            <person name="White O."/>
            <person name="Olsen G.J."/>
            <person name="Zhou L."/>
            <person name="Fleischmann R.D."/>
            <person name="Sutton G.G."/>
            <person name="Blake J.A."/>
            <person name="FitzGerald L.M."/>
            <person name="Clayton R.A."/>
            <person name="Gocayne J.D."/>
            <person name="Kerlavage A.R."/>
            <person name="Dougherty B.A."/>
            <person name="Tomb J.-F."/>
            <person name="Adams M.D."/>
            <person name="Reich C.I."/>
            <person name="Overbeek R."/>
            <person name="Kirkness E.F."/>
            <person name="Weinstock K.G."/>
            <person name="Merrick J.M."/>
            <person name="Glodek A."/>
            <person name="Scott J.L."/>
            <person name="Geoghagen N.S.M."/>
            <person name="Weidman J.F."/>
            <person name="Fuhrmann J.L."/>
            <person name="Nguyen D."/>
            <person name="Utterback T.R."/>
            <person name="Kelley J.M."/>
            <person name="Peterson J.D."/>
            <person name="Sadow P.W."/>
            <person name="Hanna M.C."/>
            <person name="Cotton M.D."/>
            <person name="Roberts K.M."/>
            <person name="Hurst M.A."/>
            <person name="Kaine B.P."/>
            <person name="Borodovsky M."/>
            <person name="Klenk H.-P."/>
            <person name="Fraser C.M."/>
            <person name="Smith H.O."/>
            <person name="Woese C.R."/>
            <person name="Venter J.C."/>
        </authorList>
    </citation>
    <scope>NUCLEOTIDE SEQUENCE [LARGE SCALE GENOMIC DNA]</scope>
    <source>
        <strain>ATCC 43067 / DSM 2661 / JAL-1 / JCM 10045 / NBRC 100440</strain>
    </source>
</reference>
<dbReference type="EMBL" id="L77117">
    <property type="protein sequence ID" value="AAB98319.1"/>
    <property type="molecule type" value="Genomic_DNA"/>
</dbReference>
<dbReference type="PIR" id="C64341">
    <property type="entry name" value="C64341"/>
</dbReference>
<dbReference type="RefSeq" id="WP_010869828.1">
    <property type="nucleotide sequence ID" value="NC_000909.1"/>
</dbReference>
<dbReference type="SMR" id="Q57777"/>
<dbReference type="STRING" id="243232.MJ_0331"/>
<dbReference type="PaxDb" id="243232-MJ_0331"/>
<dbReference type="EnsemblBacteria" id="AAB98319">
    <property type="protein sequence ID" value="AAB98319"/>
    <property type="gene ID" value="MJ_0331"/>
</dbReference>
<dbReference type="GeneID" id="1451186"/>
<dbReference type="KEGG" id="mja:MJ_0331"/>
<dbReference type="eggNOG" id="arCOG08300">
    <property type="taxonomic scope" value="Archaea"/>
</dbReference>
<dbReference type="HOGENOM" id="CLU_1811373_0_0_2"/>
<dbReference type="InParanoid" id="Q57777"/>
<dbReference type="OrthoDB" id="66018at2157"/>
<dbReference type="Proteomes" id="UP000000805">
    <property type="component" value="Chromosome"/>
</dbReference>
<dbReference type="InterPro" id="IPR006522">
    <property type="entry name" value="Phage_virion_morphogenesis"/>
</dbReference>
<dbReference type="Pfam" id="PF05069">
    <property type="entry name" value="Phage_tail_S"/>
    <property type="match status" value="1"/>
</dbReference>
<accession>Q57777</accession>
<feature type="chain" id="PRO_0000106800" description="Uncharacterized protein MJ0331">
    <location>
        <begin position="1"/>
        <end position="135"/>
    </location>
</feature>
<protein>
    <recommendedName>
        <fullName>Uncharacterized protein MJ0331</fullName>
    </recommendedName>
</protein>
<gene>
    <name type="ordered locus">MJ0331</name>
</gene>
<name>Y331_METJA</name>
<keyword id="KW-1185">Reference proteome</keyword>